<comment type="function">
    <text evidence="1">The glycine cleavage system catalyzes the degradation of glycine. The H protein shuttles the methylamine group of glycine from the P protein to the T protein.</text>
</comment>
<comment type="cofactor">
    <cofactor evidence="1">
        <name>(R)-lipoate</name>
        <dbReference type="ChEBI" id="CHEBI:83088"/>
    </cofactor>
    <text evidence="1">Binds 1 lipoyl cofactor covalently.</text>
</comment>
<comment type="subunit">
    <text evidence="1">The glycine cleavage system is composed of four proteins: P, T, L and H.</text>
</comment>
<comment type="similarity">
    <text evidence="1">Belongs to the GcvH family.</text>
</comment>
<protein>
    <recommendedName>
        <fullName evidence="1">Glycine cleavage system H protein</fullName>
    </recommendedName>
</protein>
<reference key="1">
    <citation type="journal article" date="2009" name="PLoS Genet.">
        <title>Organised genome dynamics in the Escherichia coli species results in highly diverse adaptive paths.</title>
        <authorList>
            <person name="Touchon M."/>
            <person name="Hoede C."/>
            <person name="Tenaillon O."/>
            <person name="Barbe V."/>
            <person name="Baeriswyl S."/>
            <person name="Bidet P."/>
            <person name="Bingen E."/>
            <person name="Bonacorsi S."/>
            <person name="Bouchier C."/>
            <person name="Bouvet O."/>
            <person name="Calteau A."/>
            <person name="Chiapello H."/>
            <person name="Clermont O."/>
            <person name="Cruveiller S."/>
            <person name="Danchin A."/>
            <person name="Diard M."/>
            <person name="Dossat C."/>
            <person name="Karoui M.E."/>
            <person name="Frapy E."/>
            <person name="Garry L."/>
            <person name="Ghigo J.M."/>
            <person name="Gilles A.M."/>
            <person name="Johnson J."/>
            <person name="Le Bouguenec C."/>
            <person name="Lescat M."/>
            <person name="Mangenot S."/>
            <person name="Martinez-Jehanne V."/>
            <person name="Matic I."/>
            <person name="Nassif X."/>
            <person name="Oztas S."/>
            <person name="Petit M.A."/>
            <person name="Pichon C."/>
            <person name="Rouy Z."/>
            <person name="Ruf C.S."/>
            <person name="Schneider D."/>
            <person name="Tourret J."/>
            <person name="Vacherie B."/>
            <person name="Vallenet D."/>
            <person name="Medigue C."/>
            <person name="Rocha E.P.C."/>
            <person name="Denamur E."/>
        </authorList>
    </citation>
    <scope>NUCLEOTIDE SEQUENCE [LARGE SCALE GENOMIC DNA]</scope>
    <source>
        <strain>IAI1</strain>
    </source>
</reference>
<name>GCSH_ECO8A</name>
<keyword id="KW-0450">Lipoyl</keyword>
<evidence type="ECO:0000255" key="1">
    <source>
        <dbReference type="HAMAP-Rule" id="MF_00272"/>
    </source>
</evidence>
<evidence type="ECO:0000255" key="2">
    <source>
        <dbReference type="PROSITE-ProRule" id="PRU01066"/>
    </source>
</evidence>
<organism>
    <name type="scientific">Escherichia coli O8 (strain IAI1)</name>
    <dbReference type="NCBI Taxonomy" id="585034"/>
    <lineage>
        <taxon>Bacteria</taxon>
        <taxon>Pseudomonadati</taxon>
        <taxon>Pseudomonadota</taxon>
        <taxon>Gammaproteobacteria</taxon>
        <taxon>Enterobacterales</taxon>
        <taxon>Enterobacteriaceae</taxon>
        <taxon>Escherichia</taxon>
    </lineage>
</organism>
<gene>
    <name evidence="1" type="primary">gcvH</name>
    <name type="ordered locus">ECIAI1_3023</name>
</gene>
<proteinExistence type="inferred from homology"/>
<dbReference type="EMBL" id="CU928160">
    <property type="protein sequence ID" value="CAQ99838.1"/>
    <property type="molecule type" value="Genomic_DNA"/>
</dbReference>
<dbReference type="RefSeq" id="WP_001295377.1">
    <property type="nucleotide sequence ID" value="NC_011741.1"/>
</dbReference>
<dbReference type="SMR" id="B7LYG8"/>
<dbReference type="GeneID" id="93779098"/>
<dbReference type="KEGG" id="ecr:ECIAI1_3023"/>
<dbReference type="HOGENOM" id="CLU_097408_2_1_6"/>
<dbReference type="GO" id="GO:0005829">
    <property type="term" value="C:cytosol"/>
    <property type="evidence" value="ECO:0007669"/>
    <property type="project" value="TreeGrafter"/>
</dbReference>
<dbReference type="GO" id="GO:0005960">
    <property type="term" value="C:glycine cleavage complex"/>
    <property type="evidence" value="ECO:0007669"/>
    <property type="project" value="InterPro"/>
</dbReference>
<dbReference type="GO" id="GO:0019464">
    <property type="term" value="P:glycine decarboxylation via glycine cleavage system"/>
    <property type="evidence" value="ECO:0007669"/>
    <property type="project" value="UniProtKB-UniRule"/>
</dbReference>
<dbReference type="CDD" id="cd06848">
    <property type="entry name" value="GCS_H"/>
    <property type="match status" value="1"/>
</dbReference>
<dbReference type="FunFam" id="2.40.50.100:FF:000011">
    <property type="entry name" value="Glycine cleavage system H protein"/>
    <property type="match status" value="1"/>
</dbReference>
<dbReference type="Gene3D" id="2.40.50.100">
    <property type="match status" value="1"/>
</dbReference>
<dbReference type="HAMAP" id="MF_00272">
    <property type="entry name" value="GcvH"/>
    <property type="match status" value="1"/>
</dbReference>
<dbReference type="InterPro" id="IPR003016">
    <property type="entry name" value="2-oxoA_DH_lipoyl-BS"/>
</dbReference>
<dbReference type="InterPro" id="IPR000089">
    <property type="entry name" value="Biotin_lipoyl"/>
</dbReference>
<dbReference type="InterPro" id="IPR002930">
    <property type="entry name" value="GCV_H"/>
</dbReference>
<dbReference type="InterPro" id="IPR033753">
    <property type="entry name" value="GCV_H/Fam206"/>
</dbReference>
<dbReference type="InterPro" id="IPR017453">
    <property type="entry name" value="GCV_H_sub"/>
</dbReference>
<dbReference type="InterPro" id="IPR011053">
    <property type="entry name" value="Single_hybrid_motif"/>
</dbReference>
<dbReference type="NCBIfam" id="TIGR00527">
    <property type="entry name" value="gcvH"/>
    <property type="match status" value="1"/>
</dbReference>
<dbReference type="NCBIfam" id="NF002270">
    <property type="entry name" value="PRK01202.1"/>
    <property type="match status" value="1"/>
</dbReference>
<dbReference type="PANTHER" id="PTHR11715">
    <property type="entry name" value="GLYCINE CLEAVAGE SYSTEM H PROTEIN"/>
    <property type="match status" value="1"/>
</dbReference>
<dbReference type="PANTHER" id="PTHR11715:SF3">
    <property type="entry name" value="GLYCINE CLEAVAGE SYSTEM H PROTEIN-RELATED"/>
    <property type="match status" value="1"/>
</dbReference>
<dbReference type="Pfam" id="PF01597">
    <property type="entry name" value="GCV_H"/>
    <property type="match status" value="1"/>
</dbReference>
<dbReference type="SUPFAM" id="SSF51230">
    <property type="entry name" value="Single hybrid motif"/>
    <property type="match status" value="1"/>
</dbReference>
<dbReference type="PROSITE" id="PS50968">
    <property type="entry name" value="BIOTINYL_LIPOYL"/>
    <property type="match status" value="1"/>
</dbReference>
<dbReference type="PROSITE" id="PS00189">
    <property type="entry name" value="LIPOYL"/>
    <property type="match status" value="1"/>
</dbReference>
<feature type="chain" id="PRO_1000119300" description="Glycine cleavage system H protein">
    <location>
        <begin position="1"/>
        <end position="129"/>
    </location>
</feature>
<feature type="domain" description="Lipoyl-binding" evidence="2">
    <location>
        <begin position="24"/>
        <end position="106"/>
    </location>
</feature>
<feature type="modified residue" description="N6-lipoyllysine" evidence="1">
    <location>
        <position position="65"/>
    </location>
</feature>
<sequence>MSNVPAELKYSKEHEWLRKEADGTYTVGITEHAQELLGDMVFVDLPEVGATVSAGDDCAVAESVKAASDIYAPVSGEIVAVNDALSDSPELVNSEPYAGGWIFKIKASDESELESLLDATAYEALLEDE</sequence>
<accession>B7LYG8</accession>